<proteinExistence type="inferred from homology"/>
<evidence type="ECO:0000250" key="1">
    <source>
        <dbReference type="UniProtKB" id="P01514"/>
    </source>
</evidence>
<evidence type="ECO:0000250" key="2">
    <source>
        <dbReference type="UniProtKB" id="P0DRA3"/>
    </source>
</evidence>
<evidence type="ECO:0000250" key="3">
    <source>
        <dbReference type="UniProtKB" id="P84914"/>
    </source>
</evidence>
<evidence type="ECO:0000255" key="4"/>
<evidence type="ECO:0000269" key="5">
    <source>
    </source>
</evidence>
<evidence type="ECO:0000303" key="6">
    <source>
    </source>
</evidence>
<evidence type="ECO:0000305" key="7"/>
<evidence type="ECO:0000305" key="8">
    <source>
    </source>
</evidence>
<accession>P0DRA4</accession>
<comment type="function">
    <text evidence="1 2 3">Antimicrobial peptide. Shows activity against both Gram-positive and -negative bacteria, as well against fungi. Also promotes important mast cell degranulation. Shows little hemolytic activity on rabbit and human erythrocytes (By similarity). Its mast cell degranulation activity may be related to the activation of G-protein coupled receptors in mast cells as well as interaction with other proteins located in cell endosomal membranes in the mast cells (By similarity).</text>
</comment>
<comment type="subcellular location">
    <subcellularLocation>
        <location evidence="8">Secreted</location>
    </subcellularLocation>
</comment>
<comment type="tissue specificity">
    <text evidence="8">Expressed by the venom gland.</text>
</comment>
<comment type="similarity">
    <text evidence="7">Belongs to the MCD family. Mastoparan subfamily.</text>
</comment>
<sequence length="65" mass="6654">MKMSILFLFALIASLACLQLTFAAPAASPFANPGASPEAAPLADPLADPFMPISGMLMSGMLGKK</sequence>
<protein>
    <recommendedName>
        <fullName evidence="6">VESP-VB2</fullName>
    </recommendedName>
</protein>
<reference key="1">
    <citation type="journal article" date="2008" name="Peptides">
        <title>Antimicrobial peptides from the venoms of Vespa bicolor Fabricius.</title>
        <authorList>
            <person name="Chen W."/>
            <person name="Yang X."/>
            <person name="Yang X."/>
            <person name="Zhai L."/>
            <person name="Lu Z."/>
            <person name="Liu J."/>
            <person name="Yu H."/>
        </authorList>
    </citation>
    <scope>NUCLEOTIDE SEQUENCE [MRNA]</scope>
    <source>
        <tissue>Venom gland</tissue>
    </source>
</reference>
<feature type="signal peptide" evidence="4">
    <location>
        <begin position="1"/>
        <end position="23"/>
    </location>
</feature>
<feature type="propeptide" id="PRO_0000458806" evidence="8">
    <location>
        <begin position="24"/>
        <end position="49"/>
    </location>
</feature>
<feature type="peptide" id="PRO_0000458807" description="VESP-VB2" evidence="5">
    <location>
        <begin position="50"/>
        <end position="62"/>
    </location>
</feature>
<feature type="repeat" description="AXPX 1" evidence="8">
    <location>
        <begin position="23"/>
        <end position="26"/>
    </location>
</feature>
<feature type="repeat" description="AXPX 2" evidence="8">
    <location>
        <begin position="27"/>
        <end position="30"/>
    </location>
</feature>
<feature type="repeat" description="AXPX 3" evidence="8">
    <location>
        <begin position="31"/>
        <end position="34"/>
    </location>
</feature>
<feature type="repeat" description="AXPX 4" evidence="8">
    <location>
        <begin position="35"/>
        <end position="38"/>
    </location>
</feature>
<feature type="repeat" description="AXPX 5" evidence="8">
    <location>
        <begin position="39"/>
        <end position="42"/>
    </location>
</feature>
<feature type="repeat" description="AXPX 6" evidence="8">
    <location>
        <begin position="43"/>
        <end position="46"/>
    </location>
</feature>
<feature type="repeat" description="AXPX 7" evidence="8">
    <location>
        <begin position="47"/>
        <end position="50"/>
    </location>
</feature>
<feature type="modified residue" description="Leucine amide" evidence="2">
    <location>
        <position position="62"/>
    </location>
</feature>
<name>VESP2_VESBI</name>
<organism>
    <name type="scientific">Vespa bicolor</name>
    <name type="common">Black shield wasp</name>
    <dbReference type="NCBI Taxonomy" id="619325"/>
    <lineage>
        <taxon>Eukaryota</taxon>
        <taxon>Metazoa</taxon>
        <taxon>Ecdysozoa</taxon>
        <taxon>Arthropoda</taxon>
        <taxon>Hexapoda</taxon>
        <taxon>Insecta</taxon>
        <taxon>Pterygota</taxon>
        <taxon>Neoptera</taxon>
        <taxon>Endopterygota</taxon>
        <taxon>Hymenoptera</taxon>
        <taxon>Apocrita</taxon>
        <taxon>Aculeata</taxon>
        <taxon>Vespoidea</taxon>
        <taxon>Vespidae</taxon>
        <taxon>Vespinae</taxon>
        <taxon>Vespa</taxon>
    </lineage>
</organism>
<keyword id="KW-0027">Amidation</keyword>
<keyword id="KW-0044">Antibiotic</keyword>
<keyword id="KW-0929">Antimicrobial</keyword>
<keyword id="KW-0295">Fungicide</keyword>
<keyword id="KW-1213">G-protein coupled receptor impairing toxin</keyword>
<keyword id="KW-0391">Immunity</keyword>
<keyword id="KW-0399">Innate immunity</keyword>
<keyword id="KW-0467">Mast cell degranulation</keyword>
<keyword id="KW-0677">Repeat</keyword>
<keyword id="KW-0964">Secreted</keyword>
<keyword id="KW-0732">Signal</keyword>
<keyword id="KW-0800">Toxin</keyword>
<dbReference type="GO" id="GO:0005576">
    <property type="term" value="C:extracellular region"/>
    <property type="evidence" value="ECO:0007669"/>
    <property type="project" value="UniProtKB-SubCell"/>
</dbReference>
<dbReference type="GO" id="GO:0090729">
    <property type="term" value="F:toxin activity"/>
    <property type="evidence" value="ECO:0007669"/>
    <property type="project" value="UniProtKB-KW"/>
</dbReference>
<dbReference type="GO" id="GO:0042742">
    <property type="term" value="P:defense response to bacterium"/>
    <property type="evidence" value="ECO:0007669"/>
    <property type="project" value="UniProtKB-KW"/>
</dbReference>
<dbReference type="GO" id="GO:0050832">
    <property type="term" value="P:defense response to fungus"/>
    <property type="evidence" value="ECO:0007669"/>
    <property type="project" value="UniProtKB-KW"/>
</dbReference>
<dbReference type="GO" id="GO:0045087">
    <property type="term" value="P:innate immune response"/>
    <property type="evidence" value="ECO:0007669"/>
    <property type="project" value="UniProtKB-KW"/>
</dbReference>
<dbReference type="GO" id="GO:0031640">
    <property type="term" value="P:killing of cells of another organism"/>
    <property type="evidence" value="ECO:0007669"/>
    <property type="project" value="UniProtKB-KW"/>
</dbReference>